<name>SYI_LISMO</name>
<proteinExistence type="inferred from homology"/>
<keyword id="KW-0030">Aminoacyl-tRNA synthetase</keyword>
<keyword id="KW-0067">ATP-binding</keyword>
<keyword id="KW-0963">Cytoplasm</keyword>
<keyword id="KW-0436">Ligase</keyword>
<keyword id="KW-0479">Metal-binding</keyword>
<keyword id="KW-0547">Nucleotide-binding</keyword>
<keyword id="KW-0648">Protein biosynthesis</keyword>
<keyword id="KW-1185">Reference proteome</keyword>
<keyword id="KW-0862">Zinc</keyword>
<protein>
    <recommendedName>
        <fullName evidence="1">Isoleucine--tRNA ligase</fullName>
        <ecNumber evidence="1">6.1.1.5</ecNumber>
    </recommendedName>
    <alternativeName>
        <fullName evidence="1">Isoleucyl-tRNA synthetase</fullName>
        <shortName evidence="1">IleRS</shortName>
    </alternativeName>
</protein>
<feature type="chain" id="PRO_0000098411" description="Isoleucine--tRNA ligase">
    <location>
        <begin position="1"/>
        <end position="921"/>
    </location>
</feature>
<feature type="short sequence motif" description="'HIGH' region">
    <location>
        <begin position="57"/>
        <end position="67"/>
    </location>
</feature>
<feature type="short sequence motif" description="'KMSKS' region">
    <location>
        <begin position="593"/>
        <end position="597"/>
    </location>
</feature>
<feature type="binding site" evidence="1">
    <location>
        <position position="552"/>
    </location>
    <ligand>
        <name>L-isoleucyl-5'-AMP</name>
        <dbReference type="ChEBI" id="CHEBI:178002"/>
    </ligand>
</feature>
<feature type="binding site" evidence="1">
    <location>
        <position position="596"/>
    </location>
    <ligand>
        <name>ATP</name>
        <dbReference type="ChEBI" id="CHEBI:30616"/>
    </ligand>
</feature>
<feature type="binding site" evidence="1">
    <location>
        <position position="888"/>
    </location>
    <ligand>
        <name>Zn(2+)</name>
        <dbReference type="ChEBI" id="CHEBI:29105"/>
    </ligand>
</feature>
<feature type="binding site" evidence="1">
    <location>
        <position position="891"/>
    </location>
    <ligand>
        <name>Zn(2+)</name>
        <dbReference type="ChEBI" id="CHEBI:29105"/>
    </ligand>
</feature>
<feature type="binding site" evidence="1">
    <location>
        <position position="908"/>
    </location>
    <ligand>
        <name>Zn(2+)</name>
        <dbReference type="ChEBI" id="CHEBI:29105"/>
    </ligand>
</feature>
<feature type="binding site" evidence="1">
    <location>
        <position position="911"/>
    </location>
    <ligand>
        <name>Zn(2+)</name>
        <dbReference type="ChEBI" id="CHEBI:29105"/>
    </ligand>
</feature>
<organism>
    <name type="scientific">Listeria monocytogenes serovar 1/2a (strain ATCC BAA-679 / EGD-e)</name>
    <dbReference type="NCBI Taxonomy" id="169963"/>
    <lineage>
        <taxon>Bacteria</taxon>
        <taxon>Bacillati</taxon>
        <taxon>Bacillota</taxon>
        <taxon>Bacilli</taxon>
        <taxon>Bacillales</taxon>
        <taxon>Listeriaceae</taxon>
        <taxon>Listeria</taxon>
    </lineage>
</organism>
<reference key="1">
    <citation type="journal article" date="2001" name="Science">
        <title>Comparative genomics of Listeria species.</title>
        <authorList>
            <person name="Glaser P."/>
            <person name="Frangeul L."/>
            <person name="Buchrieser C."/>
            <person name="Rusniok C."/>
            <person name="Amend A."/>
            <person name="Baquero F."/>
            <person name="Berche P."/>
            <person name="Bloecker H."/>
            <person name="Brandt P."/>
            <person name="Chakraborty T."/>
            <person name="Charbit A."/>
            <person name="Chetouani F."/>
            <person name="Couve E."/>
            <person name="de Daruvar A."/>
            <person name="Dehoux P."/>
            <person name="Domann E."/>
            <person name="Dominguez-Bernal G."/>
            <person name="Duchaud E."/>
            <person name="Durant L."/>
            <person name="Dussurget O."/>
            <person name="Entian K.-D."/>
            <person name="Fsihi H."/>
            <person name="Garcia-del Portillo F."/>
            <person name="Garrido P."/>
            <person name="Gautier L."/>
            <person name="Goebel W."/>
            <person name="Gomez-Lopez N."/>
            <person name="Hain T."/>
            <person name="Hauf J."/>
            <person name="Jackson D."/>
            <person name="Jones L.-M."/>
            <person name="Kaerst U."/>
            <person name="Kreft J."/>
            <person name="Kuhn M."/>
            <person name="Kunst F."/>
            <person name="Kurapkat G."/>
            <person name="Madueno E."/>
            <person name="Maitournam A."/>
            <person name="Mata Vicente J."/>
            <person name="Ng E."/>
            <person name="Nedjari H."/>
            <person name="Nordsiek G."/>
            <person name="Novella S."/>
            <person name="de Pablos B."/>
            <person name="Perez-Diaz J.-C."/>
            <person name="Purcell R."/>
            <person name="Remmel B."/>
            <person name="Rose M."/>
            <person name="Schlueter T."/>
            <person name="Simoes N."/>
            <person name="Tierrez A."/>
            <person name="Vazquez-Boland J.-A."/>
            <person name="Voss H."/>
            <person name="Wehland J."/>
            <person name="Cossart P."/>
        </authorList>
    </citation>
    <scope>NUCLEOTIDE SEQUENCE [LARGE SCALE GENOMIC DNA]</scope>
    <source>
        <strain>ATCC BAA-679 / EGD-e</strain>
    </source>
</reference>
<gene>
    <name evidence="1" type="primary">ileS</name>
    <name type="ordered locus">lmo2019</name>
</gene>
<accession>Q8Y5N8</accession>
<sequence>MEYKDTLLMPKTDFPMRGNLPNKEPEWQAKWEEEKLYEKIQEKNAGRPTYILHDGPPYANGELHMGHALNKTIKDIIVRYKSMAGFSSPYVPGWDTHGLPIETAIAKKGVKRKEMSIAEFRKLCAEYAMKQVDGQRTGFKRLGINGDWENPYITLLPEYEAEQIKVFGEMAKKGYIYKGKKPVYWSPSSESALAEAEIEYQDKTSASIFVAFKVTDGKGVLDEGTNIVIWTTTPWTIPANMGITVNPDLDYVVIESAGEKYVVAEALLPSLREKLGFEDATVVKTVRGSELDRVVTKHPFYDRDSLVMNGEHATAEAGTGAVHTAPGHGEDDFLIGKKYDLEILAPLDDRGVFTEEAPGFEGVFYDTANKMVTEKLEEVGALLKMEFITHSYPHDWRTKKPVIFRATAQWFASIDAFRDDLLAAVKGVNWTPAWGETRLFNMVRDRGDWVISRQRAWGVPLPIFYAENGEAIITDETINHISELFREHGSNVWFERDVKDLLPAGFTHPGSPNGEFTKETDIMDVWFDSGSSHQAVLNARPELSRPADLYMEGSDQYRGWFNSSLTTAVAITGEAPYRNVLSHGFALDGEGRKMSKSLGNTLLPGKVIKQLGADIVRLWVASVDYQADVRVSDEILKQVSEVYRKIRNTMRFLLGNINDFNPTTNTVSYENLREVDKYMLIKLNDLVKNVKDSYEAFEFSTIYHQINNFCTVELSQFYMDFAKDVVYIEAADSHDRRAMQTVFYEAVVTLTKLLAPILPHTTEEVWNSLIGEGAESIHLQDLPDVKVLANSEEITAKWDAFMQIRDNVQKALEFARNEKLIGKSMLAKVTLYVDGEAKTLFDSLEGDFAQLFIVSDFELVEGLENAPESAFKSNQVAVQITVAEGETCERCRVVKKDVGVNPKHPTLCGRCADIVVKHYEA</sequence>
<comment type="function">
    <text evidence="1">Catalyzes the attachment of isoleucine to tRNA(Ile). As IleRS can inadvertently accommodate and process structurally similar amino acids such as valine, to avoid such errors it has two additional distinct tRNA(Ile)-dependent editing activities. One activity is designated as 'pretransfer' editing and involves the hydrolysis of activated Val-AMP. The other activity is designated 'posttransfer' editing and involves deacylation of mischarged Val-tRNA(Ile).</text>
</comment>
<comment type="catalytic activity">
    <reaction evidence="1">
        <text>tRNA(Ile) + L-isoleucine + ATP = L-isoleucyl-tRNA(Ile) + AMP + diphosphate</text>
        <dbReference type="Rhea" id="RHEA:11060"/>
        <dbReference type="Rhea" id="RHEA-COMP:9666"/>
        <dbReference type="Rhea" id="RHEA-COMP:9695"/>
        <dbReference type="ChEBI" id="CHEBI:30616"/>
        <dbReference type="ChEBI" id="CHEBI:33019"/>
        <dbReference type="ChEBI" id="CHEBI:58045"/>
        <dbReference type="ChEBI" id="CHEBI:78442"/>
        <dbReference type="ChEBI" id="CHEBI:78528"/>
        <dbReference type="ChEBI" id="CHEBI:456215"/>
        <dbReference type="EC" id="6.1.1.5"/>
    </reaction>
</comment>
<comment type="cofactor">
    <cofactor evidence="1">
        <name>Zn(2+)</name>
        <dbReference type="ChEBI" id="CHEBI:29105"/>
    </cofactor>
    <text evidence="1">Binds 1 zinc ion per subunit.</text>
</comment>
<comment type="subunit">
    <text evidence="1">Monomer.</text>
</comment>
<comment type="subcellular location">
    <subcellularLocation>
        <location evidence="1">Cytoplasm</location>
    </subcellularLocation>
</comment>
<comment type="domain">
    <text evidence="1">IleRS has two distinct active sites: one for aminoacylation and one for editing. The misactivated valine is translocated from the active site to the editing site, which sterically excludes the correctly activated isoleucine. The single editing site contains two valyl binding pockets, one specific for each substrate (Val-AMP or Val-tRNA(Ile)).</text>
</comment>
<comment type="similarity">
    <text evidence="1">Belongs to the class-I aminoacyl-tRNA synthetase family. IleS type 1 subfamily.</text>
</comment>
<dbReference type="EC" id="6.1.1.5" evidence="1"/>
<dbReference type="EMBL" id="AL591981">
    <property type="protein sequence ID" value="CAD00097.1"/>
    <property type="molecule type" value="Genomic_DNA"/>
</dbReference>
<dbReference type="PIR" id="AC1327">
    <property type="entry name" value="AC1327"/>
</dbReference>
<dbReference type="RefSeq" id="NP_465543.1">
    <property type="nucleotide sequence ID" value="NC_003210.1"/>
</dbReference>
<dbReference type="RefSeq" id="WP_010989872.1">
    <property type="nucleotide sequence ID" value="NZ_CP149495.1"/>
</dbReference>
<dbReference type="SMR" id="Q8Y5N8"/>
<dbReference type="STRING" id="169963.gene:17594704"/>
<dbReference type="PaxDb" id="169963-lmo2019"/>
<dbReference type="EnsemblBacteria" id="CAD00097">
    <property type="protein sequence ID" value="CAD00097"/>
    <property type="gene ID" value="CAD00097"/>
</dbReference>
<dbReference type="GeneID" id="986874"/>
<dbReference type="KEGG" id="lmo:lmo2019"/>
<dbReference type="PATRIC" id="fig|169963.11.peg.2067"/>
<dbReference type="eggNOG" id="COG0060">
    <property type="taxonomic scope" value="Bacteria"/>
</dbReference>
<dbReference type="HOGENOM" id="CLU_001493_7_1_9"/>
<dbReference type="OrthoDB" id="9810365at2"/>
<dbReference type="PhylomeDB" id="Q8Y5N8"/>
<dbReference type="BioCyc" id="LMON169963:LMO2019-MONOMER"/>
<dbReference type="Proteomes" id="UP000000817">
    <property type="component" value="Chromosome"/>
</dbReference>
<dbReference type="GO" id="GO:0005829">
    <property type="term" value="C:cytosol"/>
    <property type="evidence" value="ECO:0000318"/>
    <property type="project" value="GO_Central"/>
</dbReference>
<dbReference type="GO" id="GO:0002161">
    <property type="term" value="F:aminoacyl-tRNA deacylase activity"/>
    <property type="evidence" value="ECO:0007669"/>
    <property type="project" value="InterPro"/>
</dbReference>
<dbReference type="GO" id="GO:0005524">
    <property type="term" value="F:ATP binding"/>
    <property type="evidence" value="ECO:0007669"/>
    <property type="project" value="UniProtKB-UniRule"/>
</dbReference>
<dbReference type="GO" id="GO:0004822">
    <property type="term" value="F:isoleucine-tRNA ligase activity"/>
    <property type="evidence" value="ECO:0000318"/>
    <property type="project" value="GO_Central"/>
</dbReference>
<dbReference type="GO" id="GO:0000049">
    <property type="term" value="F:tRNA binding"/>
    <property type="evidence" value="ECO:0007669"/>
    <property type="project" value="InterPro"/>
</dbReference>
<dbReference type="GO" id="GO:0008270">
    <property type="term" value="F:zinc ion binding"/>
    <property type="evidence" value="ECO:0007669"/>
    <property type="project" value="UniProtKB-UniRule"/>
</dbReference>
<dbReference type="GO" id="GO:0006428">
    <property type="term" value="P:isoleucyl-tRNA aminoacylation"/>
    <property type="evidence" value="ECO:0000318"/>
    <property type="project" value="GO_Central"/>
</dbReference>
<dbReference type="CDD" id="cd07960">
    <property type="entry name" value="Anticodon_Ia_Ile_BEm"/>
    <property type="match status" value="1"/>
</dbReference>
<dbReference type="CDD" id="cd00818">
    <property type="entry name" value="IleRS_core"/>
    <property type="match status" value="1"/>
</dbReference>
<dbReference type="FunFam" id="1.10.10.830:FF:000001">
    <property type="entry name" value="Isoleucine--tRNA ligase"/>
    <property type="match status" value="1"/>
</dbReference>
<dbReference type="FunFam" id="1.10.730.20:FF:000001">
    <property type="entry name" value="Isoleucine--tRNA ligase"/>
    <property type="match status" value="1"/>
</dbReference>
<dbReference type="FunFam" id="3.40.50.620:FF:000152">
    <property type="entry name" value="Isoleucine--tRNA ligase"/>
    <property type="match status" value="1"/>
</dbReference>
<dbReference type="FunFam" id="3.90.740.10:FF:000006">
    <property type="entry name" value="Isoleucine--tRNA ligase"/>
    <property type="match status" value="1"/>
</dbReference>
<dbReference type="Gene3D" id="1.10.730.20">
    <property type="match status" value="1"/>
</dbReference>
<dbReference type="Gene3D" id="3.40.50.620">
    <property type="entry name" value="HUPs"/>
    <property type="match status" value="2"/>
</dbReference>
<dbReference type="Gene3D" id="1.10.10.830">
    <property type="entry name" value="Ile-tRNA synthetase CP2 domain-like"/>
    <property type="match status" value="1"/>
</dbReference>
<dbReference type="Gene3D" id="3.90.740.10">
    <property type="entry name" value="Valyl/Leucyl/Isoleucyl-tRNA synthetase, editing domain"/>
    <property type="match status" value="1"/>
</dbReference>
<dbReference type="HAMAP" id="MF_02002">
    <property type="entry name" value="Ile_tRNA_synth_type1"/>
    <property type="match status" value="1"/>
</dbReference>
<dbReference type="InterPro" id="IPR001412">
    <property type="entry name" value="aa-tRNA-synth_I_CS"/>
</dbReference>
<dbReference type="InterPro" id="IPR002300">
    <property type="entry name" value="aa-tRNA-synth_Ia"/>
</dbReference>
<dbReference type="InterPro" id="IPR033708">
    <property type="entry name" value="Anticodon_Ile_BEm"/>
</dbReference>
<dbReference type="InterPro" id="IPR002301">
    <property type="entry name" value="Ile-tRNA-ligase"/>
</dbReference>
<dbReference type="InterPro" id="IPR023585">
    <property type="entry name" value="Ile-tRNA-ligase_type1"/>
</dbReference>
<dbReference type="InterPro" id="IPR050081">
    <property type="entry name" value="Ile-tRNA_ligase"/>
</dbReference>
<dbReference type="InterPro" id="IPR013155">
    <property type="entry name" value="M/V/L/I-tRNA-synth_anticd-bd"/>
</dbReference>
<dbReference type="InterPro" id="IPR014729">
    <property type="entry name" value="Rossmann-like_a/b/a_fold"/>
</dbReference>
<dbReference type="InterPro" id="IPR009080">
    <property type="entry name" value="tRNAsynth_Ia_anticodon-bd"/>
</dbReference>
<dbReference type="InterPro" id="IPR009008">
    <property type="entry name" value="Val/Leu/Ile-tRNA-synth_edit"/>
</dbReference>
<dbReference type="InterPro" id="IPR010663">
    <property type="entry name" value="Znf_FPG/IleRS"/>
</dbReference>
<dbReference type="NCBIfam" id="TIGR00392">
    <property type="entry name" value="ileS"/>
    <property type="match status" value="1"/>
</dbReference>
<dbReference type="PANTHER" id="PTHR42765:SF1">
    <property type="entry name" value="ISOLEUCINE--TRNA LIGASE, MITOCHONDRIAL"/>
    <property type="match status" value="1"/>
</dbReference>
<dbReference type="PANTHER" id="PTHR42765">
    <property type="entry name" value="SOLEUCYL-TRNA SYNTHETASE"/>
    <property type="match status" value="1"/>
</dbReference>
<dbReference type="Pfam" id="PF08264">
    <property type="entry name" value="Anticodon_1"/>
    <property type="match status" value="1"/>
</dbReference>
<dbReference type="Pfam" id="PF00133">
    <property type="entry name" value="tRNA-synt_1"/>
    <property type="match status" value="1"/>
</dbReference>
<dbReference type="Pfam" id="PF06827">
    <property type="entry name" value="zf-FPG_IleRS"/>
    <property type="match status" value="1"/>
</dbReference>
<dbReference type="PRINTS" id="PR00984">
    <property type="entry name" value="TRNASYNTHILE"/>
</dbReference>
<dbReference type="SUPFAM" id="SSF47323">
    <property type="entry name" value="Anticodon-binding domain of a subclass of class I aminoacyl-tRNA synthetases"/>
    <property type="match status" value="1"/>
</dbReference>
<dbReference type="SUPFAM" id="SSF52374">
    <property type="entry name" value="Nucleotidylyl transferase"/>
    <property type="match status" value="1"/>
</dbReference>
<dbReference type="SUPFAM" id="SSF50677">
    <property type="entry name" value="ValRS/IleRS/LeuRS editing domain"/>
    <property type="match status" value="1"/>
</dbReference>
<dbReference type="PROSITE" id="PS00178">
    <property type="entry name" value="AA_TRNA_LIGASE_I"/>
    <property type="match status" value="1"/>
</dbReference>
<evidence type="ECO:0000255" key="1">
    <source>
        <dbReference type="HAMAP-Rule" id="MF_02002"/>
    </source>
</evidence>